<comment type="function">
    <text evidence="2 5 6">Multifunctional enzyme with glutathione-dependent oxidoreductase, glutathione peroxidase and glutathione S-transferase (GST) activity. The disulfide bond functions as an electron carrier in the glutathione-dependent synthesis of deoxyribonucleotides by the enzyme ribonucleotide reductase. In addition, it is also involved in reducing cytosolic protein- and non-protein-disulfides in a coupled system with glutathione reductase. May play a role in protection against oxidative stress caused by superoxide in vivo by regulating the redox state of the protein sulfhydryl groups.</text>
</comment>
<comment type="subcellular location">
    <subcellularLocation>
        <location evidence="5">Cytoplasm</location>
        <location evidence="5">Cytosol</location>
    </subcellularLocation>
</comment>
<comment type="induction">
    <text evidence="5">Up-regulation of expression first detected at 24 hours after exposure to copper and reaches to a maximum after 7 days. Up-regulation of expression reaches to a maximum at 12 hours after exposure to paraquat and returns to basal levels within 24 hours.</text>
</comment>
<comment type="similarity">
    <text evidence="3">Belongs to the glutaredoxin family.</text>
</comment>
<comment type="sequence caution" evidence="7">
    <conflict type="erroneous gene model prediction">
        <sequence resource="EMBL-CDS" id="CAP69667"/>
    </conflict>
</comment>
<keyword id="KW-0963">Cytoplasm</keyword>
<keyword id="KW-1015">Disulfide bond</keyword>
<keyword id="KW-0249">Electron transport</keyword>
<keyword id="KW-0676">Redox-active center</keyword>
<keyword id="KW-1185">Reference proteome</keyword>
<keyword id="KW-0813">Transport</keyword>
<organism>
    <name type="scientific">Rhizophagus irregularis (strain DAOM 181602 / DAOM 197198 / MUCL 43194)</name>
    <name type="common">Arbuscular mycorrhizal fungus</name>
    <name type="synonym">Glomus intraradices</name>
    <dbReference type="NCBI Taxonomy" id="747089"/>
    <lineage>
        <taxon>Eukaryota</taxon>
        <taxon>Fungi</taxon>
        <taxon>Fungi incertae sedis</taxon>
        <taxon>Mucoromycota</taxon>
        <taxon>Glomeromycotina</taxon>
        <taxon>Glomeromycetes</taxon>
        <taxon>Glomerales</taxon>
        <taxon>Glomeraceae</taxon>
        <taxon>Rhizophagus</taxon>
    </lineage>
</organism>
<gene>
    <name evidence="6" type="primary">GRX1</name>
    <name type="ORF">GLOIN_2v1633026</name>
    <name type="ORF">GLOINDRAFT_350295</name>
</gene>
<dbReference type="EMBL" id="AM932873">
    <property type="protein sequence ID" value="CAP69667.1"/>
    <property type="status" value="ALT_SEQ"/>
    <property type="molecule type" value="Genomic_DNA"/>
</dbReference>
<dbReference type="EMBL" id="AUPC02000148">
    <property type="protein sequence ID" value="POG68710.1"/>
    <property type="molecule type" value="Genomic_DNA"/>
</dbReference>
<dbReference type="SMR" id="B7ZFT1"/>
<dbReference type="VEuPathDB" id="FungiDB:RhiirFUN_007571"/>
<dbReference type="eggNOG" id="KOG1752">
    <property type="taxonomic scope" value="Eukaryota"/>
</dbReference>
<dbReference type="HOGENOM" id="CLU_026126_7_2_1"/>
<dbReference type="Proteomes" id="UP000018888">
    <property type="component" value="Unassembled WGS sequence"/>
</dbReference>
<dbReference type="GO" id="GO:0005829">
    <property type="term" value="C:cytosol"/>
    <property type="evidence" value="ECO:0007669"/>
    <property type="project" value="UniProtKB-SubCell"/>
</dbReference>
<dbReference type="GO" id="GO:0005634">
    <property type="term" value="C:nucleus"/>
    <property type="evidence" value="ECO:0007669"/>
    <property type="project" value="TreeGrafter"/>
</dbReference>
<dbReference type="GO" id="GO:0015038">
    <property type="term" value="F:glutathione disulfide oxidoreductase activity"/>
    <property type="evidence" value="ECO:0007669"/>
    <property type="project" value="TreeGrafter"/>
</dbReference>
<dbReference type="GO" id="GO:0034599">
    <property type="term" value="P:cellular response to oxidative stress"/>
    <property type="evidence" value="ECO:0007669"/>
    <property type="project" value="TreeGrafter"/>
</dbReference>
<dbReference type="CDD" id="cd03419">
    <property type="entry name" value="GRX_GRXh_1_2_like"/>
    <property type="match status" value="1"/>
</dbReference>
<dbReference type="FunFam" id="3.40.30.10:FF:000026">
    <property type="entry name" value="Glutaredoxin 2"/>
    <property type="match status" value="1"/>
</dbReference>
<dbReference type="Gene3D" id="3.40.30.10">
    <property type="entry name" value="Glutaredoxin"/>
    <property type="match status" value="1"/>
</dbReference>
<dbReference type="InterPro" id="IPR011767">
    <property type="entry name" value="GLR_AS"/>
</dbReference>
<dbReference type="InterPro" id="IPR002109">
    <property type="entry name" value="Glutaredoxin"/>
</dbReference>
<dbReference type="InterPro" id="IPR011899">
    <property type="entry name" value="Glutaredoxin_euk/vir"/>
</dbReference>
<dbReference type="InterPro" id="IPR014025">
    <property type="entry name" value="Glutaredoxin_subgr"/>
</dbReference>
<dbReference type="InterPro" id="IPR036249">
    <property type="entry name" value="Thioredoxin-like_sf"/>
</dbReference>
<dbReference type="NCBIfam" id="TIGR02180">
    <property type="entry name" value="GRX_euk"/>
    <property type="match status" value="1"/>
</dbReference>
<dbReference type="PANTHER" id="PTHR45694">
    <property type="entry name" value="GLUTAREDOXIN 2"/>
    <property type="match status" value="1"/>
</dbReference>
<dbReference type="PANTHER" id="PTHR45694:SF18">
    <property type="entry name" value="GLUTAREDOXIN-1-RELATED"/>
    <property type="match status" value="1"/>
</dbReference>
<dbReference type="Pfam" id="PF00462">
    <property type="entry name" value="Glutaredoxin"/>
    <property type="match status" value="1"/>
</dbReference>
<dbReference type="PRINTS" id="PR00160">
    <property type="entry name" value="GLUTAREDOXIN"/>
</dbReference>
<dbReference type="SUPFAM" id="SSF52833">
    <property type="entry name" value="Thioredoxin-like"/>
    <property type="match status" value="1"/>
</dbReference>
<dbReference type="PROSITE" id="PS00195">
    <property type="entry name" value="GLUTAREDOXIN_1"/>
    <property type="match status" value="1"/>
</dbReference>
<dbReference type="PROSITE" id="PS51354">
    <property type="entry name" value="GLUTAREDOXIN_2"/>
    <property type="match status" value="1"/>
</dbReference>
<reference key="1">
    <citation type="journal article" date="2009" name="Fungal Genet. Biol.">
        <title>GintGRX1, the first characterized glomeromycotan glutaredoxin, is a multifunctional enzyme that responds to oxidative stress.</title>
        <authorList>
            <person name="Benabdellah K."/>
            <person name="Merlos M.A."/>
            <person name="Azcon-Aguilar C."/>
            <person name="Ferrol N."/>
        </authorList>
    </citation>
    <scope>NUCLEOTIDE SEQUENCE [GENOMIC DNA / MRNA]</scope>
    <scope>FUNCTION</scope>
    <scope>SUBCELLULAR LOCATION</scope>
    <scope>INDUCTION</scope>
    <source>
        <strain>DAOM 181602 / DAOM 197198 / MUCL 43194</strain>
    </source>
</reference>
<reference key="2">
    <citation type="journal article" date="2013" name="Proc. Natl. Acad. Sci. U.S.A.">
        <title>Genome of an arbuscular mycorrhizal fungus provides insight into the oldest plant symbiosis.</title>
        <authorList>
            <person name="Tisserant E."/>
            <person name="Malbreil M."/>
            <person name="Kuo A."/>
            <person name="Kohler A."/>
            <person name="Symeonidi A."/>
            <person name="Balestrini R."/>
            <person name="Charron P."/>
            <person name="Duensing N."/>
            <person name="Frei dit Frey N."/>
            <person name="Gianinazzi-Pearson V."/>
            <person name="Gilbert L.B."/>
            <person name="Handa Y."/>
            <person name="Herr J.R."/>
            <person name="Hijri M."/>
            <person name="Koul R."/>
            <person name="Kawaguchi M."/>
            <person name="Krajinski F."/>
            <person name="Lammers P.J."/>
            <person name="Masclaux F.G."/>
            <person name="Murat C."/>
            <person name="Morin E."/>
            <person name="Ndikumana S."/>
            <person name="Pagni M."/>
            <person name="Petitpierre D."/>
            <person name="Requena N."/>
            <person name="Rosikiewicz P."/>
            <person name="Riley R."/>
            <person name="Saito K."/>
            <person name="San Clemente H."/>
            <person name="Shapiro H."/>
            <person name="van Tuinen D."/>
            <person name="Becard G."/>
            <person name="Bonfante P."/>
            <person name="Paszkowski U."/>
            <person name="Shachar-Hill Y.Y."/>
            <person name="Tuskan G.A."/>
            <person name="Young J.P.W."/>
            <person name="Sanders I.R."/>
            <person name="Henrissat B."/>
            <person name="Rensing S.A."/>
            <person name="Grigoriev I.V."/>
            <person name="Corradi N."/>
            <person name="Roux C."/>
            <person name="Martin F."/>
        </authorList>
    </citation>
    <scope>NUCLEOTIDE SEQUENCE [LARGE SCALE GENOMIC DNA]</scope>
    <source>
        <strain>DAOM 181602 / DAOM 197198 / MUCL 43194</strain>
    </source>
</reference>
<reference key="3">
    <citation type="journal article" date="2018" name="New Phytol.">
        <title>High intraspecific genome diversity in the model arbuscular mycorrhizal symbiont Rhizophagus irregularis.</title>
        <authorList>
            <person name="Chen E.C.H."/>
            <person name="Morin E."/>
            <person name="Beaudet D."/>
            <person name="Noel J."/>
            <person name="Yildirir G."/>
            <person name="Ndikumana S."/>
            <person name="Charron P."/>
            <person name="St-Onge C."/>
            <person name="Giorgi J."/>
            <person name="Krueger M."/>
            <person name="Marton T."/>
            <person name="Ropars J."/>
            <person name="Grigoriev I.V."/>
            <person name="Hainaut M."/>
            <person name="Henrissat B."/>
            <person name="Roux C."/>
            <person name="Martin F."/>
            <person name="Corradi N."/>
        </authorList>
    </citation>
    <scope>NUCLEOTIDE SEQUENCE [LARGE SCALE GENOMIC DNA]</scope>
    <scope>GENOME REANNOTATION</scope>
    <source>
        <strain>DAOM 181602 / DAOM 197198 / MUCL 43194</strain>
    </source>
</reference>
<name>GLRX1_RHIID</name>
<evidence type="ECO:0000250" key="1">
    <source>
        <dbReference type="UniProtKB" id="P25373"/>
    </source>
</evidence>
<evidence type="ECO:0000250" key="2">
    <source>
        <dbReference type="UniProtKB" id="P68688"/>
    </source>
</evidence>
<evidence type="ECO:0000255" key="3"/>
<evidence type="ECO:0000255" key="4">
    <source>
        <dbReference type="PROSITE-ProRule" id="PRU00686"/>
    </source>
</evidence>
<evidence type="ECO:0000269" key="5">
    <source>
    </source>
</evidence>
<evidence type="ECO:0000303" key="6">
    <source>
    </source>
</evidence>
<evidence type="ECO:0000305" key="7"/>
<protein>
    <recommendedName>
        <fullName evidence="7">Glutaredoxin-1</fullName>
    </recommendedName>
    <alternativeName>
        <fullName evidence="1">Glutathione-dependent oxidoreductase 1</fullName>
    </alternativeName>
</protein>
<feature type="chain" id="PRO_0000410489" description="Glutaredoxin-1">
    <location>
        <begin position="1"/>
        <end position="101"/>
    </location>
</feature>
<feature type="domain" description="Glutaredoxin" evidence="4">
    <location>
        <begin position="5"/>
        <end position="101"/>
    </location>
</feature>
<feature type="disulfide bond" description="Redox-active" evidence="2">
    <location>
        <begin position="25"/>
        <end position="28"/>
    </location>
</feature>
<feature type="sequence conflict" description="In Ref. 1; CAP69667." evidence="7" ref="1">
    <original>L</original>
    <variation>P</variation>
    <location>
        <position position="94"/>
    </location>
</feature>
<sequence>MSQIKDRVEKLIQTNPVMMFSKSFCPYCKKAKATLKELNVEPGICELDEDSEGRAIQDYLKEKTSQNTVPNIFIKGQHVGGCDDLLAAKDNGSLSKMIAAL</sequence>
<accession>B7ZFT1</accession>
<accession>A0A2H5R1U1</accession>
<accession>U9T9D2</accession>
<proteinExistence type="evidence at transcript level"/>